<dbReference type="SMR" id="P84636"/>
<dbReference type="GO" id="GO:0006952">
    <property type="term" value="P:defense response"/>
    <property type="evidence" value="ECO:0007669"/>
    <property type="project" value="UniProtKB-KW"/>
</dbReference>
<dbReference type="InterPro" id="IPR005535">
    <property type="entry name" value="Cyclotide"/>
</dbReference>
<dbReference type="InterPro" id="IPR012323">
    <property type="entry name" value="Cyclotide_bracelet_CS"/>
</dbReference>
<dbReference type="InterPro" id="IPR036146">
    <property type="entry name" value="Cyclotide_sf"/>
</dbReference>
<dbReference type="Pfam" id="PF03784">
    <property type="entry name" value="Cyclotide"/>
    <property type="match status" value="1"/>
</dbReference>
<dbReference type="PIRSF" id="PIRSF037891">
    <property type="entry name" value="Cycloviolacin"/>
    <property type="match status" value="1"/>
</dbReference>
<dbReference type="SUPFAM" id="SSF57038">
    <property type="entry name" value="Cyclotides"/>
    <property type="match status" value="1"/>
</dbReference>
<dbReference type="PROSITE" id="PS51052">
    <property type="entry name" value="CYCLOTIDE"/>
    <property type="match status" value="1"/>
</dbReference>
<dbReference type="PROSITE" id="PS60008">
    <property type="entry name" value="CYCLOTIDE_BRACELET"/>
    <property type="match status" value="1"/>
</dbReference>
<protein>
    <recommendedName>
        <fullName>Cyclotide vico-B</fullName>
    </recommendedName>
</protein>
<sequence length="31" mass="3261">GSIPCAESCVYIPCITGIAGCSCKNKVCYYN</sequence>
<name>CYVB_VIOCT</name>
<organism>
    <name type="scientific">Viola cotyledon</name>
    <name type="common">Violeta</name>
    <dbReference type="NCBI Taxonomy" id="341256"/>
    <lineage>
        <taxon>Eukaryota</taxon>
        <taxon>Viridiplantae</taxon>
        <taxon>Streptophyta</taxon>
        <taxon>Embryophyta</taxon>
        <taxon>Tracheophyta</taxon>
        <taxon>Spermatophyta</taxon>
        <taxon>Magnoliopsida</taxon>
        <taxon>eudicotyledons</taxon>
        <taxon>Gunneridae</taxon>
        <taxon>Pentapetalae</taxon>
        <taxon>rosids</taxon>
        <taxon>fabids</taxon>
        <taxon>Malpighiales</taxon>
        <taxon>Violaceae</taxon>
        <taxon>Viola</taxon>
        <taxon>Viola subgen. Neoandinium</taxon>
        <taxon>Viola sect. Sempervivum</taxon>
    </lineage>
</organism>
<feature type="peptide" id="PRO_0000044700" description="Cyclotide vico-B">
    <location>
        <begin position="1"/>
        <end position="31"/>
    </location>
</feature>
<feature type="disulfide bond" evidence="1 2">
    <location>
        <begin position="5"/>
        <end position="21"/>
    </location>
</feature>
<feature type="disulfide bond" evidence="1 2">
    <location>
        <begin position="9"/>
        <end position="23"/>
    </location>
</feature>
<feature type="disulfide bond" evidence="1 2">
    <location>
        <begin position="14"/>
        <end position="28"/>
    </location>
</feature>
<feature type="cross-link" description="Cyclopeptide (Gly-Asn)" evidence="3">
    <location>
        <begin position="1"/>
        <end position="31"/>
    </location>
</feature>
<reference evidence="4" key="1">
    <citation type="journal article" date="2003" name="Anal. Biochem.">
        <title>Expression of Viola cyclotides by liquid chromatography-mass spectrometry and tandem mass spectrometry sequencing of intercysteine loops after introduction of charges and cleavage sites by aminoethylation.</title>
        <authorList>
            <person name="Goransson U."/>
            <person name="Broussalis A.M."/>
            <person name="Claeson P."/>
        </authorList>
    </citation>
    <scope>PROTEIN SEQUENCE</scope>
</reference>
<evidence type="ECO:0000250" key="1">
    <source>
        <dbReference type="UniProtKB" id="P56879"/>
    </source>
</evidence>
<evidence type="ECO:0000255" key="2">
    <source>
        <dbReference type="PROSITE-ProRule" id="PRU00395"/>
    </source>
</evidence>
<evidence type="ECO:0000269" key="3">
    <source>
    </source>
</evidence>
<evidence type="ECO:0000305" key="4"/>
<keyword id="KW-0903">Direct protein sequencing</keyword>
<keyword id="KW-1015">Disulfide bond</keyword>
<keyword id="KW-0960">Knottin</keyword>
<keyword id="KW-0611">Plant defense</keyword>
<accession>P84636</accession>
<proteinExistence type="evidence at protein level"/>
<comment type="function">
    <text evidence="4">Probably participates in a plant defense mechanism.</text>
</comment>
<comment type="domain">
    <text evidence="1">The presence of a 'disulfide through disulfide knot' structurally defines this protein as a knottin.</text>
</comment>
<comment type="PTM">
    <text evidence="2 3">This is a cyclic peptide.</text>
</comment>
<comment type="similarity">
    <text evidence="2">Belongs to the cyclotide family. Bracelet subfamily.</text>
</comment>
<comment type="caution">
    <text evidence="4">This peptide is cyclic. The start position was chosen by similarity to OAK1 (kalata-B1) for which the DNA sequence is known.</text>
</comment>